<protein>
    <recommendedName>
        <fullName>Putative 8-amino-7-oxononanoate synthase</fullName>
        <shortName>AONS</shortName>
        <ecNumber>2.3.1.47</ecNumber>
    </recommendedName>
    <alternativeName>
        <fullName>7-keto-8-amino-pelargonic acid synthase</fullName>
        <shortName>7-KAP synthase</shortName>
    </alternativeName>
    <alternativeName>
        <fullName>8-amino-7-ketopelargonate synthase</fullName>
    </alternativeName>
</protein>
<organism>
    <name type="scientific">Bacillus cereus (strain AH820)</name>
    <dbReference type="NCBI Taxonomy" id="405535"/>
    <lineage>
        <taxon>Bacteria</taxon>
        <taxon>Bacillati</taxon>
        <taxon>Bacillota</taxon>
        <taxon>Bacilli</taxon>
        <taxon>Bacillales</taxon>
        <taxon>Bacillaceae</taxon>
        <taxon>Bacillus</taxon>
        <taxon>Bacillus cereus group</taxon>
    </lineage>
</organism>
<reference key="1">
    <citation type="submission" date="2008-10" db="EMBL/GenBank/DDBJ databases">
        <title>Genome sequence of Bacillus cereus AH820.</title>
        <authorList>
            <person name="Dodson R.J."/>
            <person name="Durkin A.S."/>
            <person name="Rosovitz M.J."/>
            <person name="Rasko D.A."/>
            <person name="Hoffmaster A."/>
            <person name="Ravel J."/>
            <person name="Sutton G."/>
        </authorList>
    </citation>
    <scope>NUCLEOTIDE SEQUENCE [LARGE SCALE GENOMIC DNA]</scope>
    <source>
        <strain>AH820</strain>
    </source>
</reference>
<gene>
    <name type="primary">bioF</name>
    <name type="ordered locus">BCAH820_4141</name>
</gene>
<evidence type="ECO:0000250" key="1"/>
<evidence type="ECO:0000305" key="2"/>
<keyword id="KW-0093">Biotin biosynthesis</keyword>
<keyword id="KW-0663">Pyridoxal phosphate</keyword>
<keyword id="KW-0808">Transferase</keyword>
<feature type="chain" id="PRO_0000380907" description="Putative 8-amino-7-oxononanoate synthase">
    <location>
        <begin position="1"/>
        <end position="395"/>
    </location>
</feature>
<feature type="binding site" evidence="1">
    <location>
        <position position="23"/>
    </location>
    <ligand>
        <name>substrate</name>
    </ligand>
</feature>
<feature type="binding site" evidence="1">
    <location>
        <begin position="110"/>
        <end position="111"/>
    </location>
    <ligand>
        <name>pyridoxal 5'-phosphate</name>
        <dbReference type="ChEBI" id="CHEBI:597326"/>
    </ligand>
</feature>
<feature type="binding site" evidence="1">
    <location>
        <position position="135"/>
    </location>
    <ligand>
        <name>substrate</name>
    </ligand>
</feature>
<feature type="binding site" evidence="1">
    <location>
        <position position="182"/>
    </location>
    <ligand>
        <name>pyridoxal 5'-phosphate</name>
        <dbReference type="ChEBI" id="CHEBI:597326"/>
    </ligand>
</feature>
<feature type="binding site" evidence="1">
    <location>
        <begin position="207"/>
        <end position="210"/>
    </location>
    <ligand>
        <name>pyridoxal 5'-phosphate</name>
        <dbReference type="ChEBI" id="CHEBI:597326"/>
    </ligand>
</feature>
<feature type="binding site" evidence="1">
    <location>
        <begin position="239"/>
        <end position="242"/>
    </location>
    <ligand>
        <name>pyridoxal 5'-phosphate</name>
        <dbReference type="ChEBI" id="CHEBI:597326"/>
    </ligand>
</feature>
<feature type="binding site" evidence="1">
    <location>
        <position position="356"/>
    </location>
    <ligand>
        <name>substrate</name>
    </ligand>
</feature>
<feature type="modified residue" description="N6-(pyridoxal phosphate)lysine" evidence="1">
    <location>
        <position position="242"/>
    </location>
</feature>
<accession>B7JLX2</accession>
<comment type="function">
    <text evidence="1">Catalyzes the decarboxylative condensation of pimeloyl-[acyl-carrier protein] and L-alanine to produce 8-amino-7-oxononanoate (AON), [acyl-carrier protein], and carbon dioxide.</text>
</comment>
<comment type="catalytic activity">
    <reaction>
        <text>6-carboxyhexanoyl-[ACP] + L-alanine + H(+) = (8S)-8-amino-7-oxononanoate + holo-[ACP] + CO2</text>
        <dbReference type="Rhea" id="RHEA:42288"/>
        <dbReference type="Rhea" id="RHEA-COMP:9685"/>
        <dbReference type="Rhea" id="RHEA-COMP:9955"/>
        <dbReference type="ChEBI" id="CHEBI:15378"/>
        <dbReference type="ChEBI" id="CHEBI:16526"/>
        <dbReference type="ChEBI" id="CHEBI:57972"/>
        <dbReference type="ChEBI" id="CHEBI:64479"/>
        <dbReference type="ChEBI" id="CHEBI:78846"/>
        <dbReference type="ChEBI" id="CHEBI:149468"/>
        <dbReference type="EC" id="2.3.1.47"/>
    </reaction>
</comment>
<comment type="cofactor">
    <cofactor evidence="1">
        <name>pyridoxal 5'-phosphate</name>
        <dbReference type="ChEBI" id="CHEBI:597326"/>
    </cofactor>
</comment>
<comment type="pathway">
    <text>Cofactor biosynthesis; biotin biosynthesis.</text>
</comment>
<comment type="subunit">
    <text evidence="1">Homodimer.</text>
</comment>
<comment type="similarity">
    <text evidence="2">Belongs to the class-II pyridoxal-phosphate-dependent aminotransferase family. BioF subfamily.</text>
</comment>
<sequence length="395" mass="44072">MNQPWRTHLQTKLKQLHEQGQYRNLHVTEQAEETWLIRDEKRMLNLASNNYLGLAGDERLKEAAIVCTRKYGTGATASRLVVGNYSLYEEVERSICNWKGTEKALVVNSGFTANVGAISSLACRHDIVFSDKLNHASIVDGIILSGAEHKRYRHNDLNHLEALLKTASPEKRKLIVTDTVFSMDGDTAHLRELVQLKEKYGAIIIVDEAHASGIYGIGGAGLSHIEKDLAQKIDIHMGTFSKALGCYGAYLTGDAIYIEYLQNMMRSFIFTTALPPSTLGAVQKAIEIVQEDHKRRENLIANGEYFRSKLREAGFNIGNSSTHIVPIVVGSNENTLRFSKRLQEAGIAAIAIRPPTVPVHSSRIRFAVTSQHTIADLKWAIDRITHIAKEEELFV</sequence>
<name>BIOF_BACC0</name>
<proteinExistence type="inferred from homology"/>
<dbReference type="EC" id="2.3.1.47"/>
<dbReference type="EMBL" id="CP001283">
    <property type="protein sequence ID" value="ACK89479.1"/>
    <property type="molecule type" value="Genomic_DNA"/>
</dbReference>
<dbReference type="RefSeq" id="WP_001075618.1">
    <property type="nucleotide sequence ID" value="NC_011773.1"/>
</dbReference>
<dbReference type="SMR" id="B7JLX2"/>
<dbReference type="GeneID" id="45024006"/>
<dbReference type="KEGG" id="bcu:BCAH820_4141"/>
<dbReference type="HOGENOM" id="CLU_015846_11_2_9"/>
<dbReference type="UniPathway" id="UPA00078"/>
<dbReference type="Proteomes" id="UP000001363">
    <property type="component" value="Chromosome"/>
</dbReference>
<dbReference type="GO" id="GO:0008710">
    <property type="term" value="F:8-amino-7-oxononanoate synthase activity"/>
    <property type="evidence" value="ECO:0007669"/>
    <property type="project" value="UniProtKB-EC"/>
</dbReference>
<dbReference type="GO" id="GO:0030170">
    <property type="term" value="F:pyridoxal phosphate binding"/>
    <property type="evidence" value="ECO:0007669"/>
    <property type="project" value="InterPro"/>
</dbReference>
<dbReference type="GO" id="GO:0009102">
    <property type="term" value="P:biotin biosynthetic process"/>
    <property type="evidence" value="ECO:0007669"/>
    <property type="project" value="UniProtKB-UniPathway"/>
</dbReference>
<dbReference type="CDD" id="cd06454">
    <property type="entry name" value="KBL_like"/>
    <property type="match status" value="1"/>
</dbReference>
<dbReference type="FunFam" id="3.40.640.10:FF:000006">
    <property type="entry name" value="5-aminolevulinate synthase, mitochondrial"/>
    <property type="match status" value="1"/>
</dbReference>
<dbReference type="Gene3D" id="3.90.1150.10">
    <property type="entry name" value="Aspartate Aminotransferase, domain 1"/>
    <property type="match status" value="1"/>
</dbReference>
<dbReference type="Gene3D" id="3.40.640.10">
    <property type="entry name" value="Type I PLP-dependent aspartate aminotransferase-like (Major domain)"/>
    <property type="match status" value="1"/>
</dbReference>
<dbReference type="InterPro" id="IPR001917">
    <property type="entry name" value="Aminotrans_II_pyridoxalP_BS"/>
</dbReference>
<dbReference type="InterPro" id="IPR004839">
    <property type="entry name" value="Aminotransferase_I/II_large"/>
</dbReference>
<dbReference type="InterPro" id="IPR050087">
    <property type="entry name" value="AON_synthase_class-II"/>
</dbReference>
<dbReference type="InterPro" id="IPR004723">
    <property type="entry name" value="AONS_Archaea/Proteobacteria"/>
</dbReference>
<dbReference type="InterPro" id="IPR015424">
    <property type="entry name" value="PyrdxlP-dep_Trfase"/>
</dbReference>
<dbReference type="InterPro" id="IPR015421">
    <property type="entry name" value="PyrdxlP-dep_Trfase_major"/>
</dbReference>
<dbReference type="InterPro" id="IPR015422">
    <property type="entry name" value="PyrdxlP-dep_Trfase_small"/>
</dbReference>
<dbReference type="NCBIfam" id="TIGR00858">
    <property type="entry name" value="bioF"/>
    <property type="match status" value="1"/>
</dbReference>
<dbReference type="PANTHER" id="PTHR13693:SF100">
    <property type="entry name" value="8-AMINO-7-OXONONANOATE SYNTHASE"/>
    <property type="match status" value="1"/>
</dbReference>
<dbReference type="PANTHER" id="PTHR13693">
    <property type="entry name" value="CLASS II AMINOTRANSFERASE/8-AMINO-7-OXONONANOATE SYNTHASE"/>
    <property type="match status" value="1"/>
</dbReference>
<dbReference type="Pfam" id="PF00155">
    <property type="entry name" value="Aminotran_1_2"/>
    <property type="match status" value="1"/>
</dbReference>
<dbReference type="SUPFAM" id="SSF53383">
    <property type="entry name" value="PLP-dependent transferases"/>
    <property type="match status" value="1"/>
</dbReference>
<dbReference type="PROSITE" id="PS00599">
    <property type="entry name" value="AA_TRANSFER_CLASS_2"/>
    <property type="match status" value="1"/>
</dbReference>